<organism>
    <name type="scientific">Rubrobacter xylanophilus (strain DSM 9941 / JCM 11954 / NBRC 16129 / PRD-1)</name>
    <dbReference type="NCBI Taxonomy" id="266117"/>
    <lineage>
        <taxon>Bacteria</taxon>
        <taxon>Bacillati</taxon>
        <taxon>Actinomycetota</taxon>
        <taxon>Rubrobacteria</taxon>
        <taxon>Rubrobacterales</taxon>
        <taxon>Rubrobacteraceae</taxon>
        <taxon>Rubrobacter</taxon>
    </lineage>
</organism>
<keyword id="KW-0240">DNA-directed RNA polymerase</keyword>
<keyword id="KW-0548">Nucleotidyltransferase</keyword>
<keyword id="KW-1185">Reference proteome</keyword>
<keyword id="KW-0804">Transcription</keyword>
<keyword id="KW-0808">Transferase</keyword>
<gene>
    <name evidence="1" type="primary">rpoZ</name>
    <name type="ordered locus">Rxyl_1472</name>
</gene>
<proteinExistence type="inferred from homology"/>
<feature type="chain" id="PRO_1000006002" description="DNA-directed RNA polymerase subunit omega">
    <location>
        <begin position="1"/>
        <end position="106"/>
    </location>
</feature>
<feature type="region of interest" description="Disordered" evidence="2">
    <location>
        <begin position="76"/>
        <end position="106"/>
    </location>
</feature>
<feature type="compositionally biased region" description="Basic and acidic residues" evidence="2">
    <location>
        <begin position="92"/>
        <end position="106"/>
    </location>
</feature>
<sequence>MLNDLKIEELLDKVDSRYGLVVATAKRARQINEYTATLGLNESLGIPGPQVHTRSQHPLTIAIEELRAGKLKVGFREPAREAAEPAGEAPEEQQRAAGEREDQGAA</sequence>
<reference key="1">
    <citation type="submission" date="2006-06" db="EMBL/GenBank/DDBJ databases">
        <title>Complete sequence of Rubrobacter xylanophilus DSM 9941.</title>
        <authorList>
            <consortium name="US DOE Joint Genome Institute"/>
            <person name="Copeland A."/>
            <person name="Lucas S."/>
            <person name="Lapidus A."/>
            <person name="Barry K."/>
            <person name="Detter J.C."/>
            <person name="Glavina del Rio T."/>
            <person name="Hammon N."/>
            <person name="Israni S."/>
            <person name="Dalin E."/>
            <person name="Tice H."/>
            <person name="Pitluck S."/>
            <person name="Munk A.C."/>
            <person name="Brettin T."/>
            <person name="Bruce D."/>
            <person name="Han C."/>
            <person name="Tapia R."/>
            <person name="Gilna P."/>
            <person name="Schmutz J."/>
            <person name="Larimer F."/>
            <person name="Land M."/>
            <person name="Hauser L."/>
            <person name="Kyrpides N."/>
            <person name="Lykidis A."/>
            <person name="da Costa M.S."/>
            <person name="Rainey F.A."/>
            <person name="Empadinhas N."/>
            <person name="Jolivet E."/>
            <person name="Battista J.R."/>
            <person name="Richardson P."/>
        </authorList>
    </citation>
    <scope>NUCLEOTIDE SEQUENCE [LARGE SCALE GENOMIC DNA]</scope>
    <source>
        <strain>DSM 9941 / JCM 11954 / NBRC 16129 / PRD-1</strain>
    </source>
</reference>
<evidence type="ECO:0000255" key="1">
    <source>
        <dbReference type="HAMAP-Rule" id="MF_00366"/>
    </source>
</evidence>
<evidence type="ECO:0000256" key="2">
    <source>
        <dbReference type="SAM" id="MobiDB-lite"/>
    </source>
</evidence>
<name>RPOZ_RUBXD</name>
<comment type="function">
    <text evidence="1">Promotes RNA polymerase assembly. Latches the N- and C-terminal regions of the beta' subunit thereby facilitating its interaction with the beta and alpha subunits.</text>
</comment>
<comment type="catalytic activity">
    <reaction evidence="1">
        <text>RNA(n) + a ribonucleoside 5'-triphosphate = RNA(n+1) + diphosphate</text>
        <dbReference type="Rhea" id="RHEA:21248"/>
        <dbReference type="Rhea" id="RHEA-COMP:14527"/>
        <dbReference type="Rhea" id="RHEA-COMP:17342"/>
        <dbReference type="ChEBI" id="CHEBI:33019"/>
        <dbReference type="ChEBI" id="CHEBI:61557"/>
        <dbReference type="ChEBI" id="CHEBI:140395"/>
        <dbReference type="EC" id="2.7.7.6"/>
    </reaction>
</comment>
<comment type="subunit">
    <text evidence="1">The RNAP catalytic core consists of 2 alpha, 1 beta, 1 beta' and 1 omega subunit. When a sigma factor is associated with the core the holoenzyme is formed, which can initiate transcription.</text>
</comment>
<comment type="similarity">
    <text evidence="1">Belongs to the RNA polymerase subunit omega family.</text>
</comment>
<dbReference type="EC" id="2.7.7.6" evidence="1"/>
<dbReference type="EMBL" id="CP000386">
    <property type="protein sequence ID" value="ABG04434.1"/>
    <property type="molecule type" value="Genomic_DNA"/>
</dbReference>
<dbReference type="RefSeq" id="WP_011564451.1">
    <property type="nucleotide sequence ID" value="NC_008148.1"/>
</dbReference>
<dbReference type="SMR" id="Q1AVZ4"/>
<dbReference type="STRING" id="266117.Rxyl_1472"/>
<dbReference type="KEGG" id="rxy:Rxyl_1472"/>
<dbReference type="eggNOG" id="COG1758">
    <property type="taxonomic scope" value="Bacteria"/>
</dbReference>
<dbReference type="HOGENOM" id="CLU_125406_1_1_11"/>
<dbReference type="OrthoDB" id="8481372at2"/>
<dbReference type="PhylomeDB" id="Q1AVZ4"/>
<dbReference type="Proteomes" id="UP000006637">
    <property type="component" value="Chromosome"/>
</dbReference>
<dbReference type="GO" id="GO:0000428">
    <property type="term" value="C:DNA-directed RNA polymerase complex"/>
    <property type="evidence" value="ECO:0007669"/>
    <property type="project" value="UniProtKB-KW"/>
</dbReference>
<dbReference type="GO" id="GO:0003677">
    <property type="term" value="F:DNA binding"/>
    <property type="evidence" value="ECO:0007669"/>
    <property type="project" value="UniProtKB-UniRule"/>
</dbReference>
<dbReference type="GO" id="GO:0003899">
    <property type="term" value="F:DNA-directed RNA polymerase activity"/>
    <property type="evidence" value="ECO:0007669"/>
    <property type="project" value="UniProtKB-UniRule"/>
</dbReference>
<dbReference type="GO" id="GO:0006351">
    <property type="term" value="P:DNA-templated transcription"/>
    <property type="evidence" value="ECO:0007669"/>
    <property type="project" value="UniProtKB-UniRule"/>
</dbReference>
<dbReference type="Gene3D" id="3.90.940.10">
    <property type="match status" value="1"/>
</dbReference>
<dbReference type="HAMAP" id="MF_00366">
    <property type="entry name" value="RNApol_bact_RpoZ"/>
    <property type="match status" value="1"/>
</dbReference>
<dbReference type="InterPro" id="IPR003716">
    <property type="entry name" value="DNA-dir_RNA_pol_omega"/>
</dbReference>
<dbReference type="InterPro" id="IPR006110">
    <property type="entry name" value="Pol_omega/Rpo6/RPB6"/>
</dbReference>
<dbReference type="InterPro" id="IPR036161">
    <property type="entry name" value="RPB6/omega-like_sf"/>
</dbReference>
<dbReference type="NCBIfam" id="TIGR00690">
    <property type="entry name" value="rpoZ"/>
    <property type="match status" value="1"/>
</dbReference>
<dbReference type="PANTHER" id="PTHR34476">
    <property type="entry name" value="DNA-DIRECTED RNA POLYMERASE SUBUNIT OMEGA"/>
    <property type="match status" value="1"/>
</dbReference>
<dbReference type="PANTHER" id="PTHR34476:SF1">
    <property type="entry name" value="DNA-DIRECTED RNA POLYMERASE SUBUNIT OMEGA"/>
    <property type="match status" value="1"/>
</dbReference>
<dbReference type="Pfam" id="PF01192">
    <property type="entry name" value="RNA_pol_Rpb6"/>
    <property type="match status" value="1"/>
</dbReference>
<dbReference type="SMART" id="SM01409">
    <property type="entry name" value="RNA_pol_Rpb6"/>
    <property type="match status" value="1"/>
</dbReference>
<dbReference type="SUPFAM" id="SSF63562">
    <property type="entry name" value="RPB6/omega subunit-like"/>
    <property type="match status" value="1"/>
</dbReference>
<accession>Q1AVZ4</accession>
<protein>
    <recommendedName>
        <fullName evidence="1">DNA-directed RNA polymerase subunit omega</fullName>
        <shortName evidence="1">RNAP omega subunit</shortName>
        <ecNumber evidence="1">2.7.7.6</ecNumber>
    </recommendedName>
    <alternativeName>
        <fullName evidence="1">RNA polymerase omega subunit</fullName>
    </alternativeName>
    <alternativeName>
        <fullName evidence="1">Transcriptase subunit omega</fullName>
    </alternativeName>
</protein>